<protein>
    <recommendedName>
        <fullName evidence="1">Photosystem II reaction center protein L</fullName>
        <shortName evidence="1">PSII-L</shortName>
    </recommendedName>
</protein>
<keyword id="KW-0150">Chloroplast</keyword>
<keyword id="KW-0472">Membrane</keyword>
<keyword id="KW-0602">Photosynthesis</keyword>
<keyword id="KW-0604">Photosystem II</keyword>
<keyword id="KW-0934">Plastid</keyword>
<keyword id="KW-0674">Reaction center</keyword>
<keyword id="KW-0793">Thylakoid</keyword>
<keyword id="KW-0812">Transmembrane</keyword>
<keyword id="KW-1133">Transmembrane helix</keyword>
<gene>
    <name evidence="1" type="primary">psbL</name>
    <name type="ordered locus">MoinCp036</name>
</gene>
<comment type="function">
    <text evidence="1">One of the components of the core complex of photosystem II (PSII). PSII is a light-driven water:plastoquinone oxidoreductase that uses light energy to abstract electrons from H(2)O, generating O(2) and a proton gradient subsequently used for ATP formation. It consists of a core antenna complex that captures photons, and an electron transfer chain that converts photonic excitation into a charge separation. This subunit is found at the monomer-monomer interface and is required for correct PSII assembly and/or dimerization.</text>
</comment>
<comment type="subunit">
    <text evidence="1">PSII is composed of 1 copy each of membrane proteins PsbA, PsbB, PsbC, PsbD, PsbE, PsbF, PsbH, PsbI, PsbJ, PsbK, PsbL, PsbM, PsbT, PsbX, PsbY, PsbZ, Psb30/Ycf12, at least 3 peripheral proteins of the oxygen-evolving complex and a large number of cofactors. It forms dimeric complexes.</text>
</comment>
<comment type="subcellular location">
    <subcellularLocation>
        <location evidence="1">Plastid</location>
        <location evidence="1">Chloroplast thylakoid membrane</location>
        <topology evidence="1">Single-pass membrane protein</topology>
    </subcellularLocation>
</comment>
<comment type="similarity">
    <text evidence="1">Belongs to the PsbL family.</text>
</comment>
<proteinExistence type="inferred from homology"/>
<geneLocation type="chloroplast"/>
<feature type="chain" id="PRO_0000276213" description="Photosystem II reaction center protein L">
    <location>
        <begin position="1"/>
        <end position="38"/>
    </location>
</feature>
<feature type="transmembrane region" description="Helical" evidence="1">
    <location>
        <begin position="17"/>
        <end position="37"/>
    </location>
</feature>
<evidence type="ECO:0000255" key="1">
    <source>
        <dbReference type="HAMAP-Rule" id="MF_01317"/>
    </source>
</evidence>
<organism>
    <name type="scientific">Morus indica</name>
    <name type="common">Mulberry</name>
    <dbReference type="NCBI Taxonomy" id="248361"/>
    <lineage>
        <taxon>Eukaryota</taxon>
        <taxon>Viridiplantae</taxon>
        <taxon>Streptophyta</taxon>
        <taxon>Embryophyta</taxon>
        <taxon>Tracheophyta</taxon>
        <taxon>Spermatophyta</taxon>
        <taxon>Magnoliopsida</taxon>
        <taxon>eudicotyledons</taxon>
        <taxon>Gunneridae</taxon>
        <taxon>Pentapetalae</taxon>
        <taxon>rosids</taxon>
        <taxon>fabids</taxon>
        <taxon>Rosales</taxon>
        <taxon>Moraceae</taxon>
        <taxon>Moreae</taxon>
        <taxon>Morus</taxon>
    </lineage>
</organism>
<sequence length="38" mass="4497">MTQSNPNEQNVELNRTSLYWGLLLIFVLAVLFSNYFFN</sequence>
<name>PSBL_MORIN</name>
<dbReference type="EMBL" id="DQ226511">
    <property type="protein sequence ID" value="ABB20971.1"/>
    <property type="molecule type" value="Genomic_DNA"/>
</dbReference>
<dbReference type="RefSeq" id="YP_762276.1">
    <property type="nucleotide sequence ID" value="NC_008359.1"/>
</dbReference>
<dbReference type="SMR" id="Q09X02"/>
<dbReference type="GeneID" id="4290679"/>
<dbReference type="GO" id="GO:0009535">
    <property type="term" value="C:chloroplast thylakoid membrane"/>
    <property type="evidence" value="ECO:0007669"/>
    <property type="project" value="UniProtKB-SubCell"/>
</dbReference>
<dbReference type="GO" id="GO:0009539">
    <property type="term" value="C:photosystem II reaction center"/>
    <property type="evidence" value="ECO:0007669"/>
    <property type="project" value="InterPro"/>
</dbReference>
<dbReference type="GO" id="GO:0015979">
    <property type="term" value="P:photosynthesis"/>
    <property type="evidence" value="ECO:0007669"/>
    <property type="project" value="UniProtKB-UniRule"/>
</dbReference>
<dbReference type="HAMAP" id="MF_01317">
    <property type="entry name" value="PSII_PsbL"/>
    <property type="match status" value="1"/>
</dbReference>
<dbReference type="InterPro" id="IPR003372">
    <property type="entry name" value="PSII_PsbL"/>
</dbReference>
<dbReference type="InterPro" id="IPR037266">
    <property type="entry name" value="PSII_PsbL_sf"/>
</dbReference>
<dbReference type="NCBIfam" id="NF001972">
    <property type="entry name" value="PRK00753.1"/>
    <property type="match status" value="1"/>
</dbReference>
<dbReference type="Pfam" id="PF02419">
    <property type="entry name" value="PsbL"/>
    <property type="match status" value="1"/>
</dbReference>
<dbReference type="SUPFAM" id="SSF161017">
    <property type="entry name" value="Photosystem II reaction center protein L, PsbL"/>
    <property type="match status" value="1"/>
</dbReference>
<accession>Q09X02</accession>
<reference key="1">
    <citation type="submission" date="2005-09" db="EMBL/GenBank/DDBJ databases">
        <title>The chloroplast genome of mulberry: structural features and comparative analysis.</title>
        <authorList>
            <person name="Ravi V."/>
            <person name="Khurana J.P."/>
            <person name="Tyagi A.K."/>
            <person name="Khurana P."/>
        </authorList>
    </citation>
    <scope>NUCLEOTIDE SEQUENCE [LARGE SCALE GENOMIC DNA]</scope>
    <source>
        <strain>cv. K2</strain>
    </source>
</reference>